<protein>
    <recommendedName>
        <fullName evidence="1">Putative 3-methyladenine DNA glycosylase</fullName>
        <ecNumber evidence="1">3.2.2.-</ecNumber>
    </recommendedName>
</protein>
<gene>
    <name type="ordered locus">Haur_1276</name>
</gene>
<accession>A9B1N9</accession>
<evidence type="ECO:0000255" key="1">
    <source>
        <dbReference type="HAMAP-Rule" id="MF_00527"/>
    </source>
</evidence>
<sequence length="221" mass="24098">MSKILSAEFHQRHSLVVARELLGCSLVRRLATGEELRGRIVETEAYTPDDPSCHAHRRNTPRARSMFALGGISYVYIIYGIYHCLNVVTQGLGEGAAVLIRAIEPLSGNATMAQLVQKDPANPMRIASGPGMVCRALAVDKSLDGVDLSSQQAGLWFEQGPSLPDQAILQTPRIGINSDPHTVAAPWRLIVADSKALSGTRRQNQGQAYQAQPDWFQKQAI</sequence>
<proteinExistence type="inferred from homology"/>
<dbReference type="EC" id="3.2.2.-" evidence="1"/>
<dbReference type="EMBL" id="CP000875">
    <property type="protein sequence ID" value="ABX03924.1"/>
    <property type="molecule type" value="Genomic_DNA"/>
</dbReference>
<dbReference type="SMR" id="A9B1N9"/>
<dbReference type="FunCoup" id="A9B1N9">
    <property type="interactions" value="97"/>
</dbReference>
<dbReference type="STRING" id="316274.Haur_1276"/>
<dbReference type="KEGG" id="hau:Haur_1276"/>
<dbReference type="eggNOG" id="COG2094">
    <property type="taxonomic scope" value="Bacteria"/>
</dbReference>
<dbReference type="HOGENOM" id="CLU_060471_4_1_0"/>
<dbReference type="InParanoid" id="A9B1N9"/>
<dbReference type="BioCyc" id="HAUR316274:GHYA-1298-MONOMER"/>
<dbReference type="Proteomes" id="UP000000787">
    <property type="component" value="Chromosome"/>
</dbReference>
<dbReference type="GO" id="GO:0003905">
    <property type="term" value="F:alkylbase DNA N-glycosylase activity"/>
    <property type="evidence" value="ECO:0007669"/>
    <property type="project" value="InterPro"/>
</dbReference>
<dbReference type="GO" id="GO:0003677">
    <property type="term" value="F:DNA binding"/>
    <property type="evidence" value="ECO:0007669"/>
    <property type="project" value="InterPro"/>
</dbReference>
<dbReference type="GO" id="GO:0006284">
    <property type="term" value="P:base-excision repair"/>
    <property type="evidence" value="ECO:0007669"/>
    <property type="project" value="InterPro"/>
</dbReference>
<dbReference type="CDD" id="cd00540">
    <property type="entry name" value="AAG"/>
    <property type="match status" value="1"/>
</dbReference>
<dbReference type="FunFam" id="3.10.300.10:FF:000001">
    <property type="entry name" value="Putative 3-methyladenine DNA glycosylase"/>
    <property type="match status" value="1"/>
</dbReference>
<dbReference type="Gene3D" id="3.10.300.10">
    <property type="entry name" value="Methylpurine-DNA glycosylase (MPG)"/>
    <property type="match status" value="1"/>
</dbReference>
<dbReference type="HAMAP" id="MF_00527">
    <property type="entry name" value="3MGH"/>
    <property type="match status" value="1"/>
</dbReference>
<dbReference type="InterPro" id="IPR011034">
    <property type="entry name" value="Formyl_transferase-like_C_sf"/>
</dbReference>
<dbReference type="InterPro" id="IPR003180">
    <property type="entry name" value="MPG"/>
</dbReference>
<dbReference type="InterPro" id="IPR036995">
    <property type="entry name" value="MPG_sf"/>
</dbReference>
<dbReference type="NCBIfam" id="TIGR00567">
    <property type="entry name" value="3mg"/>
    <property type="match status" value="1"/>
</dbReference>
<dbReference type="PANTHER" id="PTHR10429">
    <property type="entry name" value="DNA-3-METHYLADENINE GLYCOSYLASE"/>
    <property type="match status" value="1"/>
</dbReference>
<dbReference type="PANTHER" id="PTHR10429:SF0">
    <property type="entry name" value="DNA-3-METHYLADENINE GLYCOSYLASE"/>
    <property type="match status" value="1"/>
</dbReference>
<dbReference type="Pfam" id="PF02245">
    <property type="entry name" value="Pur_DNA_glyco"/>
    <property type="match status" value="1"/>
</dbReference>
<dbReference type="SUPFAM" id="SSF50486">
    <property type="entry name" value="FMT C-terminal domain-like"/>
    <property type="match status" value="1"/>
</dbReference>
<reference key="1">
    <citation type="journal article" date="2011" name="Stand. Genomic Sci.">
        <title>Complete genome sequence of the filamentous gliding predatory bacterium Herpetosiphon aurantiacus type strain (114-95(T)).</title>
        <authorList>
            <person name="Kiss H."/>
            <person name="Nett M."/>
            <person name="Domin N."/>
            <person name="Martin K."/>
            <person name="Maresca J.A."/>
            <person name="Copeland A."/>
            <person name="Lapidus A."/>
            <person name="Lucas S."/>
            <person name="Berry K.W."/>
            <person name="Glavina Del Rio T."/>
            <person name="Dalin E."/>
            <person name="Tice H."/>
            <person name="Pitluck S."/>
            <person name="Richardson P."/>
            <person name="Bruce D."/>
            <person name="Goodwin L."/>
            <person name="Han C."/>
            <person name="Detter J.C."/>
            <person name="Schmutz J."/>
            <person name="Brettin T."/>
            <person name="Land M."/>
            <person name="Hauser L."/>
            <person name="Kyrpides N.C."/>
            <person name="Ivanova N."/>
            <person name="Goeker M."/>
            <person name="Woyke T."/>
            <person name="Klenk H.P."/>
            <person name="Bryant D.A."/>
        </authorList>
    </citation>
    <scope>NUCLEOTIDE SEQUENCE [LARGE SCALE GENOMIC DNA]</scope>
    <source>
        <strain>ATCC 23779 / DSM 785 / 114-95</strain>
    </source>
</reference>
<feature type="chain" id="PRO_1000146266" description="Putative 3-methyladenine DNA glycosylase">
    <location>
        <begin position="1"/>
        <end position="221"/>
    </location>
</feature>
<organism>
    <name type="scientific">Herpetosiphon aurantiacus (strain ATCC 23779 / DSM 785 / 114-95)</name>
    <dbReference type="NCBI Taxonomy" id="316274"/>
    <lineage>
        <taxon>Bacteria</taxon>
        <taxon>Bacillati</taxon>
        <taxon>Chloroflexota</taxon>
        <taxon>Chloroflexia</taxon>
        <taxon>Herpetosiphonales</taxon>
        <taxon>Herpetosiphonaceae</taxon>
        <taxon>Herpetosiphon</taxon>
    </lineage>
</organism>
<comment type="similarity">
    <text evidence="1">Belongs to the DNA glycosylase MPG family.</text>
</comment>
<name>3MGH_HERA2</name>
<keyword id="KW-0227">DNA damage</keyword>
<keyword id="KW-0234">DNA repair</keyword>
<keyword id="KW-0378">Hydrolase</keyword>